<protein>
    <recommendedName>
        <fullName evidence="1">DNA-directed RNA polymerase subunit omega</fullName>
        <shortName evidence="1">RNAP omega subunit</shortName>
        <ecNumber evidence="1">2.7.7.6</ecNumber>
    </recommendedName>
    <alternativeName>
        <fullName evidence="1">RNA polymerase omega subunit</fullName>
    </alternativeName>
    <alternativeName>
        <fullName evidence="1">Transcriptase subunit omega</fullName>
    </alternativeName>
</protein>
<reference key="1">
    <citation type="journal article" date="2004" name="Proc. Natl. Acad. Sci. U.S.A.">
        <title>Structural flexibility in the Burkholderia mallei genome.</title>
        <authorList>
            <person name="Nierman W.C."/>
            <person name="DeShazer D."/>
            <person name="Kim H.S."/>
            <person name="Tettelin H."/>
            <person name="Nelson K.E."/>
            <person name="Feldblyum T.V."/>
            <person name="Ulrich R.L."/>
            <person name="Ronning C.M."/>
            <person name="Brinkac L.M."/>
            <person name="Daugherty S.C."/>
            <person name="Davidsen T.D."/>
            <person name="DeBoy R.T."/>
            <person name="Dimitrov G."/>
            <person name="Dodson R.J."/>
            <person name="Durkin A.S."/>
            <person name="Gwinn M.L."/>
            <person name="Haft D.H."/>
            <person name="Khouri H.M."/>
            <person name="Kolonay J.F."/>
            <person name="Madupu R."/>
            <person name="Mohammoud Y."/>
            <person name="Nelson W.C."/>
            <person name="Radune D."/>
            <person name="Romero C.M."/>
            <person name="Sarria S."/>
            <person name="Selengut J."/>
            <person name="Shamblin C."/>
            <person name="Sullivan S.A."/>
            <person name="White O."/>
            <person name="Yu Y."/>
            <person name="Zafar N."/>
            <person name="Zhou L."/>
            <person name="Fraser C.M."/>
        </authorList>
    </citation>
    <scope>NUCLEOTIDE SEQUENCE [LARGE SCALE GENOMIC DNA]</scope>
    <source>
        <strain>ATCC 23344</strain>
    </source>
</reference>
<gene>
    <name evidence="1" type="primary">rpoZ</name>
    <name type="ordered locus">BMA2095</name>
</gene>
<comment type="function">
    <text evidence="1">Promotes RNA polymerase assembly. Latches the N- and C-terminal regions of the beta' subunit thereby facilitating its interaction with the beta and alpha subunits.</text>
</comment>
<comment type="catalytic activity">
    <reaction evidence="1">
        <text>RNA(n) + a ribonucleoside 5'-triphosphate = RNA(n+1) + diphosphate</text>
        <dbReference type="Rhea" id="RHEA:21248"/>
        <dbReference type="Rhea" id="RHEA-COMP:14527"/>
        <dbReference type="Rhea" id="RHEA-COMP:17342"/>
        <dbReference type="ChEBI" id="CHEBI:33019"/>
        <dbReference type="ChEBI" id="CHEBI:61557"/>
        <dbReference type="ChEBI" id="CHEBI:140395"/>
        <dbReference type="EC" id="2.7.7.6"/>
    </reaction>
</comment>
<comment type="subunit">
    <text evidence="1">The RNAP catalytic core consists of 2 alpha, 1 beta, 1 beta' and 1 omega subunit. When a sigma factor is associated with the core the holoenzyme is formed, which can initiate transcription.</text>
</comment>
<comment type="similarity">
    <text evidence="1">Belongs to the RNA polymerase subunit omega family.</text>
</comment>
<evidence type="ECO:0000255" key="1">
    <source>
        <dbReference type="HAMAP-Rule" id="MF_00366"/>
    </source>
</evidence>
<keyword id="KW-0240">DNA-directed RNA polymerase</keyword>
<keyword id="KW-0548">Nucleotidyltransferase</keyword>
<keyword id="KW-1185">Reference proteome</keyword>
<keyword id="KW-0804">Transcription</keyword>
<keyword id="KW-0808">Transferase</keyword>
<proteinExistence type="inferred from homology"/>
<sequence>MARITVEDCLKQIPNRFELALAATYRARQLAQGHTPKIESRDKPTVVALREIAAGQVGVEMLKKVPA</sequence>
<organism>
    <name type="scientific">Burkholderia mallei (strain ATCC 23344)</name>
    <dbReference type="NCBI Taxonomy" id="243160"/>
    <lineage>
        <taxon>Bacteria</taxon>
        <taxon>Pseudomonadati</taxon>
        <taxon>Pseudomonadota</taxon>
        <taxon>Betaproteobacteria</taxon>
        <taxon>Burkholderiales</taxon>
        <taxon>Burkholderiaceae</taxon>
        <taxon>Burkholderia</taxon>
        <taxon>pseudomallei group</taxon>
    </lineage>
</organism>
<name>RPOZ_BURMA</name>
<dbReference type="EC" id="2.7.7.6" evidence="1"/>
<dbReference type="EMBL" id="CP000010">
    <property type="protein sequence ID" value="AAU50025.1"/>
    <property type="molecule type" value="Genomic_DNA"/>
</dbReference>
<dbReference type="RefSeq" id="WP_004185855.1">
    <property type="nucleotide sequence ID" value="NC_006348.1"/>
</dbReference>
<dbReference type="RefSeq" id="YP_103669.1">
    <property type="nucleotide sequence ID" value="NC_006348.1"/>
</dbReference>
<dbReference type="SMR" id="Q62I01"/>
<dbReference type="GeneID" id="93061155"/>
<dbReference type="KEGG" id="bma:BMA2095"/>
<dbReference type="PATRIC" id="fig|243160.12.peg.2163"/>
<dbReference type="eggNOG" id="COG1758">
    <property type="taxonomic scope" value="Bacteria"/>
</dbReference>
<dbReference type="HOGENOM" id="CLU_125406_5_2_4"/>
<dbReference type="Proteomes" id="UP000006693">
    <property type="component" value="Chromosome 1"/>
</dbReference>
<dbReference type="GO" id="GO:0000428">
    <property type="term" value="C:DNA-directed RNA polymerase complex"/>
    <property type="evidence" value="ECO:0007669"/>
    <property type="project" value="UniProtKB-KW"/>
</dbReference>
<dbReference type="GO" id="GO:0003677">
    <property type="term" value="F:DNA binding"/>
    <property type="evidence" value="ECO:0007669"/>
    <property type="project" value="UniProtKB-UniRule"/>
</dbReference>
<dbReference type="GO" id="GO:0003899">
    <property type="term" value="F:DNA-directed RNA polymerase activity"/>
    <property type="evidence" value="ECO:0007669"/>
    <property type="project" value="UniProtKB-UniRule"/>
</dbReference>
<dbReference type="GO" id="GO:0006351">
    <property type="term" value="P:DNA-templated transcription"/>
    <property type="evidence" value="ECO:0007669"/>
    <property type="project" value="UniProtKB-UniRule"/>
</dbReference>
<dbReference type="Gene3D" id="3.90.940.10">
    <property type="match status" value="1"/>
</dbReference>
<dbReference type="HAMAP" id="MF_00366">
    <property type="entry name" value="RNApol_bact_RpoZ"/>
    <property type="match status" value="1"/>
</dbReference>
<dbReference type="InterPro" id="IPR003716">
    <property type="entry name" value="DNA-dir_RNA_pol_omega"/>
</dbReference>
<dbReference type="InterPro" id="IPR006110">
    <property type="entry name" value="Pol_omega/Rpo6/RPB6"/>
</dbReference>
<dbReference type="InterPro" id="IPR036161">
    <property type="entry name" value="RPB6/omega-like_sf"/>
</dbReference>
<dbReference type="NCBIfam" id="TIGR00690">
    <property type="entry name" value="rpoZ"/>
    <property type="match status" value="1"/>
</dbReference>
<dbReference type="PANTHER" id="PTHR34476">
    <property type="entry name" value="DNA-DIRECTED RNA POLYMERASE SUBUNIT OMEGA"/>
    <property type="match status" value="1"/>
</dbReference>
<dbReference type="PANTHER" id="PTHR34476:SF1">
    <property type="entry name" value="DNA-DIRECTED RNA POLYMERASE SUBUNIT OMEGA"/>
    <property type="match status" value="1"/>
</dbReference>
<dbReference type="Pfam" id="PF01192">
    <property type="entry name" value="RNA_pol_Rpb6"/>
    <property type="match status" value="1"/>
</dbReference>
<dbReference type="SMART" id="SM01409">
    <property type="entry name" value="RNA_pol_Rpb6"/>
    <property type="match status" value="1"/>
</dbReference>
<dbReference type="SUPFAM" id="SSF63562">
    <property type="entry name" value="RPB6/omega subunit-like"/>
    <property type="match status" value="1"/>
</dbReference>
<feature type="chain" id="PRO_0000237442" description="DNA-directed RNA polymerase subunit omega">
    <location>
        <begin position="1"/>
        <end position="67"/>
    </location>
</feature>
<accession>Q62I01</accession>